<accession>Q1JP06</accession>
<reference key="1">
    <citation type="journal article" date="2006" name="Proc. Natl. Acad. Sci. U.S.A.">
        <title>Molecular genetic anatomy of inter- and intraserotype variation in the human bacterial pathogen group A Streptococcus.</title>
        <authorList>
            <person name="Beres S.B."/>
            <person name="Richter E.W."/>
            <person name="Nagiec M.J."/>
            <person name="Sumby P."/>
            <person name="Porcella S.F."/>
            <person name="DeLeo F.R."/>
            <person name="Musser J.M."/>
        </authorList>
    </citation>
    <scope>NUCLEOTIDE SEQUENCE [LARGE SCALE GENOMIC DNA]</scope>
    <source>
        <strain>MGAS9429</strain>
    </source>
</reference>
<keyword id="KW-0687">Ribonucleoprotein</keyword>
<keyword id="KW-0689">Ribosomal protein</keyword>
<keyword id="KW-0694">RNA-binding</keyword>
<keyword id="KW-0699">rRNA-binding</keyword>
<evidence type="ECO:0000255" key="1">
    <source>
        <dbReference type="HAMAP-Rule" id="MF_01326"/>
    </source>
</evidence>
<evidence type="ECO:0000305" key="2"/>
<gene>
    <name evidence="1" type="primary">rplX</name>
    <name type="ordered locus">MGAS9429_Spy0055</name>
</gene>
<proteinExistence type="inferred from homology"/>
<comment type="function">
    <text evidence="1">One of two assembly initiator proteins, it binds directly to the 5'-end of the 23S rRNA, where it nucleates assembly of the 50S subunit.</text>
</comment>
<comment type="function">
    <text evidence="1">One of the proteins that surrounds the polypeptide exit tunnel on the outside of the subunit.</text>
</comment>
<comment type="subunit">
    <text evidence="1">Part of the 50S ribosomal subunit.</text>
</comment>
<comment type="similarity">
    <text evidence="1">Belongs to the universal ribosomal protein uL24 family.</text>
</comment>
<sequence>MFVKKGDKVRVIAGKDKGTEAVVLKALPKVNKVIVEGVGMIKKHQKPNTENPQGAIVEKEAPIHVSNVQVLDKNGVAGRVGYKVVDGKKVRYSKKSGEVLD</sequence>
<dbReference type="EMBL" id="CP000259">
    <property type="protein sequence ID" value="ABF31243.1"/>
    <property type="molecule type" value="Genomic_DNA"/>
</dbReference>
<dbReference type="RefSeq" id="WP_002986636.1">
    <property type="nucleotide sequence ID" value="NC_008021.1"/>
</dbReference>
<dbReference type="SMR" id="Q1JP06"/>
<dbReference type="GeneID" id="69900037"/>
<dbReference type="KEGG" id="spk:MGAS9429_Spy0055"/>
<dbReference type="HOGENOM" id="CLU_093315_2_0_9"/>
<dbReference type="Proteomes" id="UP000002433">
    <property type="component" value="Chromosome"/>
</dbReference>
<dbReference type="GO" id="GO:1990904">
    <property type="term" value="C:ribonucleoprotein complex"/>
    <property type="evidence" value="ECO:0007669"/>
    <property type="project" value="UniProtKB-KW"/>
</dbReference>
<dbReference type="GO" id="GO:0005840">
    <property type="term" value="C:ribosome"/>
    <property type="evidence" value="ECO:0007669"/>
    <property type="project" value="UniProtKB-KW"/>
</dbReference>
<dbReference type="GO" id="GO:0019843">
    <property type="term" value="F:rRNA binding"/>
    <property type="evidence" value="ECO:0007669"/>
    <property type="project" value="UniProtKB-UniRule"/>
</dbReference>
<dbReference type="GO" id="GO:0003735">
    <property type="term" value="F:structural constituent of ribosome"/>
    <property type="evidence" value="ECO:0007669"/>
    <property type="project" value="InterPro"/>
</dbReference>
<dbReference type="GO" id="GO:0006412">
    <property type="term" value="P:translation"/>
    <property type="evidence" value="ECO:0007669"/>
    <property type="project" value="UniProtKB-UniRule"/>
</dbReference>
<dbReference type="CDD" id="cd06089">
    <property type="entry name" value="KOW_RPL26"/>
    <property type="match status" value="1"/>
</dbReference>
<dbReference type="FunFam" id="2.30.30.30:FF:000004">
    <property type="entry name" value="50S ribosomal protein L24"/>
    <property type="match status" value="1"/>
</dbReference>
<dbReference type="Gene3D" id="2.30.30.30">
    <property type="match status" value="1"/>
</dbReference>
<dbReference type="HAMAP" id="MF_01326_B">
    <property type="entry name" value="Ribosomal_uL24_B"/>
    <property type="match status" value="1"/>
</dbReference>
<dbReference type="InterPro" id="IPR005824">
    <property type="entry name" value="KOW"/>
</dbReference>
<dbReference type="InterPro" id="IPR014722">
    <property type="entry name" value="Rib_uL2_dom2"/>
</dbReference>
<dbReference type="InterPro" id="IPR003256">
    <property type="entry name" value="Ribosomal_uL24"/>
</dbReference>
<dbReference type="InterPro" id="IPR005825">
    <property type="entry name" value="Ribosomal_uL24_CS"/>
</dbReference>
<dbReference type="InterPro" id="IPR041988">
    <property type="entry name" value="Ribosomal_uL24_KOW"/>
</dbReference>
<dbReference type="InterPro" id="IPR008991">
    <property type="entry name" value="Translation_prot_SH3-like_sf"/>
</dbReference>
<dbReference type="NCBIfam" id="TIGR01079">
    <property type="entry name" value="rplX_bact"/>
    <property type="match status" value="1"/>
</dbReference>
<dbReference type="PANTHER" id="PTHR12903">
    <property type="entry name" value="MITOCHONDRIAL RIBOSOMAL PROTEIN L24"/>
    <property type="match status" value="1"/>
</dbReference>
<dbReference type="Pfam" id="PF00467">
    <property type="entry name" value="KOW"/>
    <property type="match status" value="1"/>
</dbReference>
<dbReference type="Pfam" id="PF17136">
    <property type="entry name" value="ribosomal_L24"/>
    <property type="match status" value="1"/>
</dbReference>
<dbReference type="SMART" id="SM00739">
    <property type="entry name" value="KOW"/>
    <property type="match status" value="1"/>
</dbReference>
<dbReference type="SUPFAM" id="SSF50104">
    <property type="entry name" value="Translation proteins SH3-like domain"/>
    <property type="match status" value="1"/>
</dbReference>
<dbReference type="PROSITE" id="PS01108">
    <property type="entry name" value="RIBOSOMAL_L24"/>
    <property type="match status" value="1"/>
</dbReference>
<organism>
    <name type="scientific">Streptococcus pyogenes serotype M12 (strain MGAS9429)</name>
    <dbReference type="NCBI Taxonomy" id="370551"/>
    <lineage>
        <taxon>Bacteria</taxon>
        <taxon>Bacillati</taxon>
        <taxon>Bacillota</taxon>
        <taxon>Bacilli</taxon>
        <taxon>Lactobacillales</taxon>
        <taxon>Streptococcaceae</taxon>
        <taxon>Streptococcus</taxon>
    </lineage>
</organism>
<name>RL24_STRPC</name>
<protein>
    <recommendedName>
        <fullName evidence="1">Large ribosomal subunit protein uL24</fullName>
    </recommendedName>
    <alternativeName>
        <fullName evidence="2">50S ribosomal protein L24</fullName>
    </alternativeName>
</protein>
<feature type="chain" id="PRO_1000052321" description="Large ribosomal subunit protein uL24">
    <location>
        <begin position="1"/>
        <end position="101"/>
    </location>
</feature>